<comment type="similarity">
    <text evidence="2">Belongs to the AATF family.</text>
</comment>
<reference key="1">
    <citation type="journal article" date="2005" name="Nature">
        <title>The genome of the social amoeba Dictyostelium discoideum.</title>
        <authorList>
            <person name="Eichinger L."/>
            <person name="Pachebat J.A."/>
            <person name="Gloeckner G."/>
            <person name="Rajandream M.A."/>
            <person name="Sucgang R."/>
            <person name="Berriman M."/>
            <person name="Song J."/>
            <person name="Olsen R."/>
            <person name="Szafranski K."/>
            <person name="Xu Q."/>
            <person name="Tunggal B."/>
            <person name="Kummerfeld S."/>
            <person name="Madera M."/>
            <person name="Konfortov B.A."/>
            <person name="Rivero F."/>
            <person name="Bankier A.T."/>
            <person name="Lehmann R."/>
            <person name="Hamlin N."/>
            <person name="Davies R."/>
            <person name="Gaudet P."/>
            <person name="Fey P."/>
            <person name="Pilcher K."/>
            <person name="Chen G."/>
            <person name="Saunders D."/>
            <person name="Sodergren E.J."/>
            <person name="Davis P."/>
            <person name="Kerhornou A."/>
            <person name="Nie X."/>
            <person name="Hall N."/>
            <person name="Anjard C."/>
            <person name="Hemphill L."/>
            <person name="Bason N."/>
            <person name="Farbrother P."/>
            <person name="Desany B."/>
            <person name="Just E."/>
            <person name="Morio T."/>
            <person name="Rost R."/>
            <person name="Churcher C.M."/>
            <person name="Cooper J."/>
            <person name="Haydock S."/>
            <person name="van Driessche N."/>
            <person name="Cronin A."/>
            <person name="Goodhead I."/>
            <person name="Muzny D.M."/>
            <person name="Mourier T."/>
            <person name="Pain A."/>
            <person name="Lu M."/>
            <person name="Harper D."/>
            <person name="Lindsay R."/>
            <person name="Hauser H."/>
            <person name="James K.D."/>
            <person name="Quiles M."/>
            <person name="Madan Babu M."/>
            <person name="Saito T."/>
            <person name="Buchrieser C."/>
            <person name="Wardroper A."/>
            <person name="Felder M."/>
            <person name="Thangavelu M."/>
            <person name="Johnson D."/>
            <person name="Knights A."/>
            <person name="Loulseged H."/>
            <person name="Mungall K.L."/>
            <person name="Oliver K."/>
            <person name="Price C."/>
            <person name="Quail M.A."/>
            <person name="Urushihara H."/>
            <person name="Hernandez J."/>
            <person name="Rabbinowitsch E."/>
            <person name="Steffen D."/>
            <person name="Sanders M."/>
            <person name="Ma J."/>
            <person name="Kohara Y."/>
            <person name="Sharp S."/>
            <person name="Simmonds M.N."/>
            <person name="Spiegler S."/>
            <person name="Tivey A."/>
            <person name="Sugano S."/>
            <person name="White B."/>
            <person name="Walker D."/>
            <person name="Woodward J.R."/>
            <person name="Winckler T."/>
            <person name="Tanaka Y."/>
            <person name="Shaulsky G."/>
            <person name="Schleicher M."/>
            <person name="Weinstock G.M."/>
            <person name="Rosenthal A."/>
            <person name="Cox E.C."/>
            <person name="Chisholm R.L."/>
            <person name="Gibbs R.A."/>
            <person name="Loomis W.F."/>
            <person name="Platzer M."/>
            <person name="Kay R.R."/>
            <person name="Williams J.G."/>
            <person name="Dear P.H."/>
            <person name="Noegel A.A."/>
            <person name="Barrell B.G."/>
            <person name="Kuspa A."/>
        </authorList>
    </citation>
    <scope>NUCLEOTIDE SEQUENCE [LARGE SCALE GENOMIC DNA]</scope>
    <source>
        <strain>AX4</strain>
    </source>
</reference>
<organism>
    <name type="scientific">Dictyostelium discoideum</name>
    <name type="common">Social amoeba</name>
    <dbReference type="NCBI Taxonomy" id="44689"/>
    <lineage>
        <taxon>Eukaryota</taxon>
        <taxon>Amoebozoa</taxon>
        <taxon>Evosea</taxon>
        <taxon>Eumycetozoa</taxon>
        <taxon>Dictyostelia</taxon>
        <taxon>Dictyosteliales</taxon>
        <taxon>Dictyosteliaceae</taxon>
        <taxon>Dictyostelium</taxon>
    </lineage>
</organism>
<gene>
    <name type="ORF">DDB_G0270496</name>
</gene>
<dbReference type="EMBL" id="AAFI02000005">
    <property type="protein sequence ID" value="EAL72598.2"/>
    <property type="molecule type" value="Genomic_DNA"/>
</dbReference>
<dbReference type="RefSeq" id="XP_645916.2">
    <property type="nucleotide sequence ID" value="XM_640824.2"/>
</dbReference>
<dbReference type="SMR" id="Q55E65"/>
<dbReference type="FunCoup" id="Q55E65">
    <property type="interactions" value="174"/>
</dbReference>
<dbReference type="STRING" id="44689.Q55E65"/>
<dbReference type="PaxDb" id="44689-DDB0267139"/>
<dbReference type="EnsemblProtists" id="EAL72598">
    <property type="protein sequence ID" value="EAL72598"/>
    <property type="gene ID" value="DDB_G0270496"/>
</dbReference>
<dbReference type="GeneID" id="8616857"/>
<dbReference type="KEGG" id="ddi:DDB_G0270496"/>
<dbReference type="dictyBase" id="DDB_G0270496"/>
<dbReference type="VEuPathDB" id="AmoebaDB:DDB_G0270496"/>
<dbReference type="eggNOG" id="KOG2773">
    <property type="taxonomic scope" value="Eukaryota"/>
</dbReference>
<dbReference type="HOGENOM" id="CLU_018299_1_1_1"/>
<dbReference type="InParanoid" id="Q55E65"/>
<dbReference type="OMA" id="INFMAPN"/>
<dbReference type="PhylomeDB" id="Q55E65"/>
<dbReference type="PRO" id="PR:Q55E65"/>
<dbReference type="Proteomes" id="UP000002195">
    <property type="component" value="Chromosome 1"/>
</dbReference>
<dbReference type="GO" id="GO:0005730">
    <property type="term" value="C:nucleolus"/>
    <property type="evidence" value="ECO:0000318"/>
    <property type="project" value="GO_Central"/>
</dbReference>
<dbReference type="InterPro" id="IPR025160">
    <property type="entry name" value="AATF"/>
</dbReference>
<dbReference type="InterPro" id="IPR039223">
    <property type="entry name" value="AATF/Bfr2"/>
</dbReference>
<dbReference type="InterPro" id="IPR012617">
    <property type="entry name" value="AATF_C"/>
</dbReference>
<dbReference type="PANTHER" id="PTHR15565">
    <property type="entry name" value="AATF PROTEIN APOPTOSIS ANTAGONIZING TRANSCRIPTION FACTOR"/>
    <property type="match status" value="1"/>
</dbReference>
<dbReference type="PANTHER" id="PTHR15565:SF0">
    <property type="entry name" value="PROTEIN AATF"/>
    <property type="match status" value="1"/>
</dbReference>
<dbReference type="Pfam" id="PF13339">
    <property type="entry name" value="AATF-Che1"/>
    <property type="match status" value="1"/>
</dbReference>
<dbReference type="Pfam" id="PF08164">
    <property type="entry name" value="TRAUB"/>
    <property type="match status" value="1"/>
</dbReference>
<protein>
    <recommendedName>
        <fullName>Putative uncharacterized protein DDB_G0270496</fullName>
    </recommendedName>
</protein>
<feature type="chain" id="PRO_0000363974" description="Putative uncharacterized protein DDB_G0270496">
    <location>
        <begin position="1"/>
        <end position="523"/>
    </location>
</feature>
<feature type="region of interest" description="Disordered" evidence="1">
    <location>
        <begin position="1"/>
        <end position="36"/>
    </location>
</feature>
<feature type="region of interest" description="Disordered" evidence="1">
    <location>
        <begin position="51"/>
        <end position="187"/>
    </location>
</feature>
<feature type="region of interest" description="Disordered" evidence="1">
    <location>
        <begin position="200"/>
        <end position="224"/>
    </location>
</feature>
<feature type="compositionally biased region" description="Polar residues" evidence="1">
    <location>
        <begin position="1"/>
        <end position="14"/>
    </location>
</feature>
<feature type="compositionally biased region" description="Basic and acidic residues" evidence="1">
    <location>
        <begin position="87"/>
        <end position="97"/>
    </location>
</feature>
<feature type="compositionally biased region" description="Acidic residues" evidence="1">
    <location>
        <begin position="117"/>
        <end position="130"/>
    </location>
</feature>
<feature type="compositionally biased region" description="Acidic residues" evidence="1">
    <location>
        <begin position="138"/>
        <end position="182"/>
    </location>
</feature>
<feature type="compositionally biased region" description="Basic and acidic residues" evidence="1">
    <location>
        <begin position="200"/>
        <end position="210"/>
    </location>
</feature>
<proteinExistence type="inferred from homology"/>
<sequence>MAVSKNIKSNVSTHVTKKATKKTTNNGEESKTVKKAVNNKLLSDEINEILHSSENIKKSIDPESMDYFGDSAKVSKSDENFGEIEDDNRGTRLKGDIPTEFTSGKYSGKKSSRKDNDMEEDDELDQDNEYDIFGGDKQDDDDGDDDNSEDLDDAFDFQDKQDDDDDDDDKEDDDEDDDDDENVVVSSNIDRADMLFKKLQKQEKEEEKQPKLVGHTNEADEMEKAQNTKNQTALYNEFLTTRILLQKTINCANKLPKPKIYKEFLELNDESLQKKFKETKTASCLLISELYNLQSELIDLNDEIPKQQQSKKRIRPDQSLSEIWNTIEEQNQRLDQFHNQTITKWNNRISVTSSINSGGKGGNNLKSLNQSILSQIQNTLNDFERLQKRTKLKRTTYRIIGEKQQQLSSANSIDQNEEEKDEYDDEIFDDTDFYQTLLKDLEANNSEENEVGSQYWIEMRNLKKKKKKKVNQKASKGRILRYEVFPKLENFMTPQSLPIPDWNIDQLYQNLFGGLGNVNINLN</sequence>
<name>Y0496_DICDI</name>
<keyword id="KW-1185">Reference proteome</keyword>
<accession>Q55E65</accession>
<evidence type="ECO:0000256" key="1">
    <source>
        <dbReference type="SAM" id="MobiDB-lite"/>
    </source>
</evidence>
<evidence type="ECO:0000305" key="2"/>